<gene>
    <name evidence="1" type="primary">psaJ</name>
</gene>
<name>PSAJ_CALFG</name>
<proteinExistence type="inferred from homology"/>
<accession>Q7YJV6</accession>
<protein>
    <recommendedName>
        <fullName evidence="1">Photosystem I reaction center subunit IX</fullName>
    </recommendedName>
    <alternativeName>
        <fullName evidence="1">PSI-J</fullName>
    </alternativeName>
</protein>
<reference key="1">
    <citation type="journal article" date="2003" name="Plant Syst. Evol.">
        <title>The chloroplast genome of the 'basal' angiosperm Calycanthus fertilis -- structural and phylogenetic analyses.</title>
        <authorList>
            <person name="Goremykin V."/>
            <person name="Hirsch-Ernst K.I."/>
            <person name="Woelfl S."/>
            <person name="Hellwig F.H."/>
        </authorList>
    </citation>
    <scope>NUCLEOTIDE SEQUENCE [LARGE SCALE GENOMIC DNA]</scope>
</reference>
<geneLocation type="chloroplast"/>
<evidence type="ECO:0000255" key="1">
    <source>
        <dbReference type="HAMAP-Rule" id="MF_00522"/>
    </source>
</evidence>
<feature type="chain" id="PRO_0000207783" description="Photosystem I reaction center subunit IX">
    <location>
        <begin position="1"/>
        <end position="44"/>
    </location>
</feature>
<feature type="transmembrane region" description="Helical" evidence="1">
    <location>
        <begin position="7"/>
        <end position="27"/>
    </location>
</feature>
<organism>
    <name type="scientific">Calycanthus floridus var. glaucus</name>
    <name type="common">Eastern sweetshrub</name>
    <name type="synonym">Calycanthus fertilis var. ferax</name>
    <dbReference type="NCBI Taxonomy" id="212734"/>
    <lineage>
        <taxon>Eukaryota</taxon>
        <taxon>Viridiplantae</taxon>
        <taxon>Streptophyta</taxon>
        <taxon>Embryophyta</taxon>
        <taxon>Tracheophyta</taxon>
        <taxon>Spermatophyta</taxon>
        <taxon>Magnoliopsida</taxon>
        <taxon>Magnoliidae</taxon>
        <taxon>Laurales</taxon>
        <taxon>Calycanthaceae</taxon>
        <taxon>Calycanthus</taxon>
    </lineage>
</organism>
<comment type="function">
    <text evidence="1">May help in the organization of the PsaE and PsaF subunits.</text>
</comment>
<comment type="subcellular location">
    <subcellularLocation>
        <location evidence="1">Plastid</location>
        <location evidence="1">Chloroplast thylakoid membrane</location>
        <topology evidence="1">Single-pass membrane protein</topology>
    </subcellularLocation>
</comment>
<comment type="similarity">
    <text evidence="1">Belongs to the PsaJ family.</text>
</comment>
<dbReference type="EMBL" id="AJ428413">
    <property type="protein sequence ID" value="CAD28741.1"/>
    <property type="molecule type" value="Genomic_DNA"/>
</dbReference>
<dbReference type="RefSeq" id="NP_862774.1">
    <property type="nucleotide sequence ID" value="NC_004993.1"/>
</dbReference>
<dbReference type="SMR" id="Q7YJV6"/>
<dbReference type="GeneID" id="2598004"/>
<dbReference type="GO" id="GO:0009535">
    <property type="term" value="C:chloroplast thylakoid membrane"/>
    <property type="evidence" value="ECO:0007669"/>
    <property type="project" value="UniProtKB-SubCell"/>
</dbReference>
<dbReference type="GO" id="GO:0009522">
    <property type="term" value="C:photosystem I"/>
    <property type="evidence" value="ECO:0007669"/>
    <property type="project" value="UniProtKB-KW"/>
</dbReference>
<dbReference type="GO" id="GO:0015979">
    <property type="term" value="P:photosynthesis"/>
    <property type="evidence" value="ECO:0007669"/>
    <property type="project" value="UniProtKB-UniRule"/>
</dbReference>
<dbReference type="FunFam" id="1.20.5.510:FF:000001">
    <property type="entry name" value="Photosystem I reaction center subunit IX"/>
    <property type="match status" value="1"/>
</dbReference>
<dbReference type="Gene3D" id="1.20.5.510">
    <property type="entry name" value="Single helix bin"/>
    <property type="match status" value="1"/>
</dbReference>
<dbReference type="HAMAP" id="MF_00522">
    <property type="entry name" value="PSI_PsaJ"/>
    <property type="match status" value="1"/>
</dbReference>
<dbReference type="InterPro" id="IPR002615">
    <property type="entry name" value="PSI_PsaJ"/>
</dbReference>
<dbReference type="InterPro" id="IPR036062">
    <property type="entry name" value="PSI_PsaJ_sf"/>
</dbReference>
<dbReference type="PANTHER" id="PTHR36082">
    <property type="match status" value="1"/>
</dbReference>
<dbReference type="PANTHER" id="PTHR36082:SF2">
    <property type="entry name" value="PHOTOSYSTEM I REACTION CENTER SUBUNIT IX"/>
    <property type="match status" value="1"/>
</dbReference>
<dbReference type="Pfam" id="PF01701">
    <property type="entry name" value="PSI_PsaJ"/>
    <property type="match status" value="1"/>
</dbReference>
<dbReference type="SUPFAM" id="SSF81544">
    <property type="entry name" value="Subunit IX of photosystem I reaction centre, PsaJ"/>
    <property type="match status" value="1"/>
</dbReference>
<keyword id="KW-0150">Chloroplast</keyword>
<keyword id="KW-0472">Membrane</keyword>
<keyword id="KW-0602">Photosynthesis</keyword>
<keyword id="KW-0603">Photosystem I</keyword>
<keyword id="KW-0934">Plastid</keyword>
<keyword id="KW-0793">Thylakoid</keyword>
<keyword id="KW-0812">Transmembrane</keyword>
<keyword id="KW-1133">Transmembrane helix</keyword>
<sequence>MRDIKTYLSTAPVLATLWFGSLAGLLIEINRLFPDALTFPFFSF</sequence>